<geneLocation type="chloroplast"/>
<proteinExistence type="inferred from homology"/>
<organism>
    <name type="scientific">Coffea arabica</name>
    <name type="common">Arabian coffee</name>
    <dbReference type="NCBI Taxonomy" id="13443"/>
    <lineage>
        <taxon>Eukaryota</taxon>
        <taxon>Viridiplantae</taxon>
        <taxon>Streptophyta</taxon>
        <taxon>Embryophyta</taxon>
        <taxon>Tracheophyta</taxon>
        <taxon>Spermatophyta</taxon>
        <taxon>Magnoliopsida</taxon>
        <taxon>eudicotyledons</taxon>
        <taxon>Gunneridae</taxon>
        <taxon>Pentapetalae</taxon>
        <taxon>asterids</taxon>
        <taxon>lamiids</taxon>
        <taxon>Gentianales</taxon>
        <taxon>Rubiaceae</taxon>
        <taxon>Ixoroideae</taxon>
        <taxon>Gardenieae complex</taxon>
        <taxon>Bertiereae - Coffeeae clade</taxon>
        <taxon>Coffeeae</taxon>
        <taxon>Coffea</taxon>
    </lineage>
</organism>
<name>PSBF_COFAR</name>
<evidence type="ECO:0000255" key="1">
    <source>
        <dbReference type="HAMAP-Rule" id="MF_00643"/>
    </source>
</evidence>
<dbReference type="EMBL" id="EF044213">
    <property type="protein sequence ID" value="ABJ89695.1"/>
    <property type="molecule type" value="Genomic_DNA"/>
</dbReference>
<dbReference type="RefSeq" id="YP_817498.1">
    <property type="nucleotide sequence ID" value="NC_008535.1"/>
</dbReference>
<dbReference type="SMR" id="A0A351"/>
<dbReference type="GeneID" id="4421779"/>
<dbReference type="OrthoDB" id="77at2759"/>
<dbReference type="Proteomes" id="UP000515148">
    <property type="component" value="Chloroplast Pltd"/>
</dbReference>
<dbReference type="GO" id="GO:0009535">
    <property type="term" value="C:chloroplast thylakoid membrane"/>
    <property type="evidence" value="ECO:0007669"/>
    <property type="project" value="UniProtKB-SubCell"/>
</dbReference>
<dbReference type="GO" id="GO:0009539">
    <property type="term" value="C:photosystem II reaction center"/>
    <property type="evidence" value="ECO:0007669"/>
    <property type="project" value="InterPro"/>
</dbReference>
<dbReference type="GO" id="GO:0009055">
    <property type="term" value="F:electron transfer activity"/>
    <property type="evidence" value="ECO:0007669"/>
    <property type="project" value="UniProtKB-UniRule"/>
</dbReference>
<dbReference type="GO" id="GO:0020037">
    <property type="term" value="F:heme binding"/>
    <property type="evidence" value="ECO:0007669"/>
    <property type="project" value="InterPro"/>
</dbReference>
<dbReference type="GO" id="GO:0005506">
    <property type="term" value="F:iron ion binding"/>
    <property type="evidence" value="ECO:0007669"/>
    <property type="project" value="UniProtKB-UniRule"/>
</dbReference>
<dbReference type="GO" id="GO:0009767">
    <property type="term" value="P:photosynthetic electron transport chain"/>
    <property type="evidence" value="ECO:0007669"/>
    <property type="project" value="InterPro"/>
</dbReference>
<dbReference type="HAMAP" id="MF_00643">
    <property type="entry name" value="PSII_PsbF"/>
    <property type="match status" value="1"/>
</dbReference>
<dbReference type="InterPro" id="IPR006241">
    <property type="entry name" value="PSII_cyt_b559_bsu"/>
</dbReference>
<dbReference type="InterPro" id="IPR006216">
    <property type="entry name" value="PSII_cyt_b559_CS"/>
</dbReference>
<dbReference type="InterPro" id="IPR013081">
    <property type="entry name" value="PSII_cyt_b559_N"/>
</dbReference>
<dbReference type="NCBIfam" id="TIGR01333">
    <property type="entry name" value="cyt_b559_beta"/>
    <property type="match status" value="1"/>
</dbReference>
<dbReference type="Pfam" id="PF00283">
    <property type="entry name" value="Cytochrom_B559"/>
    <property type="match status" value="1"/>
</dbReference>
<dbReference type="PIRSF" id="PIRSF000037">
    <property type="entry name" value="PsbF"/>
    <property type="match status" value="1"/>
</dbReference>
<dbReference type="SUPFAM" id="SSF161045">
    <property type="entry name" value="Cytochrome b559 subunits"/>
    <property type="match status" value="1"/>
</dbReference>
<dbReference type="PROSITE" id="PS00537">
    <property type="entry name" value="CYTOCHROME_B559"/>
    <property type="match status" value="1"/>
</dbReference>
<feature type="chain" id="PRO_0000275727" description="Cytochrome b559 subunit beta">
    <location>
        <begin position="1"/>
        <end position="39"/>
    </location>
</feature>
<feature type="transmembrane region" description="Helical" evidence="1">
    <location>
        <begin position="14"/>
        <end position="30"/>
    </location>
</feature>
<feature type="binding site" description="axial binding residue" evidence="1">
    <location>
        <position position="18"/>
    </location>
    <ligand>
        <name>heme</name>
        <dbReference type="ChEBI" id="CHEBI:30413"/>
        <note>ligand shared with alpha subunit</note>
    </ligand>
    <ligandPart>
        <name>Fe</name>
        <dbReference type="ChEBI" id="CHEBI:18248"/>
    </ligandPart>
</feature>
<keyword id="KW-0150">Chloroplast</keyword>
<keyword id="KW-0249">Electron transport</keyword>
<keyword id="KW-0349">Heme</keyword>
<keyword id="KW-0408">Iron</keyword>
<keyword id="KW-0472">Membrane</keyword>
<keyword id="KW-0479">Metal-binding</keyword>
<keyword id="KW-0602">Photosynthesis</keyword>
<keyword id="KW-0604">Photosystem II</keyword>
<keyword id="KW-0934">Plastid</keyword>
<keyword id="KW-1185">Reference proteome</keyword>
<keyword id="KW-0793">Thylakoid</keyword>
<keyword id="KW-0812">Transmembrane</keyword>
<keyword id="KW-1133">Transmembrane helix</keyword>
<keyword id="KW-0813">Transport</keyword>
<protein>
    <recommendedName>
        <fullName evidence="1">Cytochrome b559 subunit beta</fullName>
    </recommendedName>
    <alternativeName>
        <fullName evidence="1">PSII reaction center subunit VI</fullName>
    </alternativeName>
</protein>
<accession>A0A351</accession>
<gene>
    <name evidence="1" type="primary">psbF</name>
</gene>
<sequence length="39" mass="4484">MTIDRTYPIFTVRWLAVHGLAVPTVFFLGSISAMQFIQR</sequence>
<comment type="function">
    <text evidence="1">This b-type cytochrome is tightly associated with the reaction center of photosystem II (PSII). PSII is a light-driven water:plastoquinone oxidoreductase that uses light energy to abstract electrons from H(2)O, generating O(2) and a proton gradient subsequently used for ATP formation. It consists of a core antenna complex that captures photons, and an electron transfer chain that converts photonic excitation into a charge separation.</text>
</comment>
<comment type="cofactor">
    <cofactor evidence="1">
        <name>heme b</name>
        <dbReference type="ChEBI" id="CHEBI:60344"/>
    </cofactor>
    <text evidence="1">With its partner (PsbE) binds heme. PSII binds additional chlorophylls, carotenoids and specific lipids.</text>
</comment>
<comment type="subunit">
    <text evidence="1">Heterodimer of an alpha subunit and a beta subunit. PSII is composed of 1 copy each of membrane proteins PsbA, PsbB, PsbC, PsbD, PsbE, PsbF, PsbH, PsbI, PsbJ, PsbK, PsbL, PsbM, PsbT, PsbX, PsbY, PsbZ, Psb30/Ycf12, at least 3 peripheral proteins of the oxygen-evolving complex and a large number of cofactors. It forms dimeric complexes.</text>
</comment>
<comment type="subcellular location">
    <subcellularLocation>
        <location evidence="1">Plastid</location>
        <location evidence="1">Chloroplast thylakoid membrane</location>
        <topology evidence="1">Single-pass membrane protein</topology>
    </subcellularLocation>
</comment>
<comment type="similarity">
    <text evidence="1">Belongs to the PsbE/PsbF family.</text>
</comment>
<reference key="1">
    <citation type="journal article" date="2007" name="Plant Biotechnol. J.">
        <title>The complete nucleotide sequence of the coffee (Coffea arabica L.) chloroplast genome: organization and implications for biotechnology and phylogenetic relationships amongst angiosperms.</title>
        <authorList>
            <person name="Samson N."/>
            <person name="Bausher M.G."/>
            <person name="Lee S.-B."/>
            <person name="Jansen R.K."/>
            <person name="Daniell H."/>
        </authorList>
    </citation>
    <scope>NUCLEOTIDE SEQUENCE [LARGE SCALE GENOMIC DNA]</scope>
</reference>